<geneLocation type="chloroplast"/>
<comment type="function">
    <text evidence="1">Seems to be required for the assembly of the photosystem I complex.</text>
</comment>
<comment type="subcellular location">
    <subcellularLocation>
        <location evidence="1">Plastid</location>
        <location evidence="1">Chloroplast thylakoid membrane</location>
        <topology evidence="1">Multi-pass membrane protein</topology>
    </subcellularLocation>
</comment>
<comment type="similarity">
    <text evidence="1">Belongs to the Ycf4 family.</text>
</comment>
<name>YCF4_SOLBU</name>
<organism>
    <name type="scientific">Solanum bulbocastanum</name>
    <name type="common">Wild potato</name>
    <dbReference type="NCBI Taxonomy" id="147425"/>
    <lineage>
        <taxon>Eukaryota</taxon>
        <taxon>Viridiplantae</taxon>
        <taxon>Streptophyta</taxon>
        <taxon>Embryophyta</taxon>
        <taxon>Tracheophyta</taxon>
        <taxon>Spermatophyta</taxon>
        <taxon>Magnoliopsida</taxon>
        <taxon>eudicotyledons</taxon>
        <taxon>Gunneridae</taxon>
        <taxon>Pentapetalae</taxon>
        <taxon>asterids</taxon>
        <taxon>lamiids</taxon>
        <taxon>Solanales</taxon>
        <taxon>Solanaceae</taxon>
        <taxon>Solanoideae</taxon>
        <taxon>Solaneae</taxon>
        <taxon>Solanum</taxon>
    </lineage>
</organism>
<gene>
    <name evidence="1" type="primary">ycf4</name>
</gene>
<evidence type="ECO:0000255" key="1">
    <source>
        <dbReference type="HAMAP-Rule" id="MF_00437"/>
    </source>
</evidence>
<feature type="chain" id="PRO_0000275671" description="Photosystem I assembly protein Ycf4">
    <location>
        <begin position="1"/>
        <end position="184"/>
    </location>
</feature>
<feature type="transmembrane region" description="Helical" evidence="1">
    <location>
        <begin position="19"/>
        <end position="39"/>
    </location>
</feature>
<feature type="transmembrane region" description="Helical" evidence="1">
    <location>
        <begin position="57"/>
        <end position="77"/>
    </location>
</feature>
<accession>Q2MIH6</accession>
<proteinExistence type="inferred from homology"/>
<reference key="1">
    <citation type="journal article" date="2006" name="Theor. Appl. Genet.">
        <title>Complete chloroplast genome sequences of Solanum bulbocastanum, Solanum lycopersicum and comparative analyses with other Solanaceae genomes.</title>
        <authorList>
            <person name="Daniell H."/>
            <person name="Lee S.-B."/>
            <person name="Grevich J."/>
            <person name="Saski C."/>
            <person name="Quesada-Vargas T."/>
            <person name="Guda C."/>
            <person name="Tomkins J."/>
            <person name="Jansen R.K."/>
        </authorList>
    </citation>
    <scope>NUCLEOTIDE SEQUENCE [LARGE SCALE GENOMIC DNA]</scope>
    <source>
        <strain>cv. PT29</strain>
    </source>
</reference>
<keyword id="KW-0150">Chloroplast</keyword>
<keyword id="KW-0472">Membrane</keyword>
<keyword id="KW-0602">Photosynthesis</keyword>
<keyword id="KW-0934">Plastid</keyword>
<keyword id="KW-0793">Thylakoid</keyword>
<keyword id="KW-0812">Transmembrane</keyword>
<keyword id="KW-1133">Transmembrane helix</keyword>
<sequence>MTWRSDDIWIELITGSRKISNFCWALILFLGSLGFLLVGTSSYLGRNLLSFFPPQQIIFFPQGIVMSFYGIAGLFISSYLWCTISWNVGSGYDRFDRKEGIVCIFRWGFPGKNRRIFLRFLIKDIQSVRIEVKEGIYARRVLYMDIRGQGSIPLTRTDENLTPREIEQKAAELAYFLRVPIEVF</sequence>
<dbReference type="EMBL" id="DQ347958">
    <property type="protein sequence ID" value="ABC56224.1"/>
    <property type="molecule type" value="Genomic_DNA"/>
</dbReference>
<dbReference type="RefSeq" id="YP_538859.1">
    <property type="nucleotide sequence ID" value="NC_007943.1"/>
</dbReference>
<dbReference type="GeneID" id="3989435"/>
<dbReference type="GO" id="GO:0009535">
    <property type="term" value="C:chloroplast thylakoid membrane"/>
    <property type="evidence" value="ECO:0007669"/>
    <property type="project" value="UniProtKB-SubCell"/>
</dbReference>
<dbReference type="GO" id="GO:0009522">
    <property type="term" value="C:photosystem I"/>
    <property type="evidence" value="ECO:0007669"/>
    <property type="project" value="InterPro"/>
</dbReference>
<dbReference type="GO" id="GO:0015979">
    <property type="term" value="P:photosynthesis"/>
    <property type="evidence" value="ECO:0007669"/>
    <property type="project" value="UniProtKB-UniRule"/>
</dbReference>
<dbReference type="HAMAP" id="MF_00437">
    <property type="entry name" value="Ycf4"/>
    <property type="match status" value="1"/>
</dbReference>
<dbReference type="InterPro" id="IPR003359">
    <property type="entry name" value="PSI_Ycf4_assembly"/>
</dbReference>
<dbReference type="NCBIfam" id="NF002712">
    <property type="entry name" value="PRK02542.1"/>
    <property type="match status" value="1"/>
</dbReference>
<dbReference type="PANTHER" id="PTHR33288">
    <property type="match status" value="1"/>
</dbReference>
<dbReference type="PANTHER" id="PTHR33288:SF4">
    <property type="entry name" value="PHOTOSYSTEM I ASSEMBLY PROTEIN YCF4"/>
    <property type="match status" value="1"/>
</dbReference>
<dbReference type="Pfam" id="PF02392">
    <property type="entry name" value="Ycf4"/>
    <property type="match status" value="1"/>
</dbReference>
<protein>
    <recommendedName>
        <fullName evidence="1">Photosystem I assembly protein Ycf4</fullName>
    </recommendedName>
</protein>